<accession>Q18FG3</accession>
<gene>
    <name evidence="1" type="primary">pyrG</name>
    <name type="ordered locus">HQ_3195A</name>
</gene>
<evidence type="ECO:0000255" key="1">
    <source>
        <dbReference type="HAMAP-Rule" id="MF_01227"/>
    </source>
</evidence>
<feature type="chain" id="PRO_0000266272" description="CTP synthase">
    <location>
        <begin position="1"/>
        <end position="555"/>
    </location>
</feature>
<feature type="domain" description="Glutamine amidotransferase type-1" evidence="1">
    <location>
        <begin position="307"/>
        <end position="542"/>
    </location>
</feature>
<feature type="region of interest" description="Amidoligase domain" evidence="1">
    <location>
        <begin position="1"/>
        <end position="277"/>
    </location>
</feature>
<feature type="active site" description="Nucleophile; for glutamine hydrolysis" evidence="1">
    <location>
        <position position="391"/>
    </location>
</feature>
<feature type="active site" evidence="1">
    <location>
        <position position="515"/>
    </location>
</feature>
<feature type="active site" evidence="1">
    <location>
        <position position="517"/>
    </location>
</feature>
<feature type="binding site" evidence="1">
    <location>
        <position position="26"/>
    </location>
    <ligand>
        <name>CTP</name>
        <dbReference type="ChEBI" id="CHEBI:37563"/>
        <note>allosteric inhibitor</note>
    </ligand>
</feature>
<feature type="binding site" evidence="1">
    <location>
        <position position="26"/>
    </location>
    <ligand>
        <name>UTP</name>
        <dbReference type="ChEBI" id="CHEBI:46398"/>
    </ligand>
</feature>
<feature type="binding site" evidence="1">
    <location>
        <begin position="27"/>
        <end position="32"/>
    </location>
    <ligand>
        <name>ATP</name>
        <dbReference type="ChEBI" id="CHEBI:30616"/>
    </ligand>
</feature>
<feature type="binding site" evidence="1">
    <location>
        <position position="67"/>
    </location>
    <ligand>
        <name>L-glutamine</name>
        <dbReference type="ChEBI" id="CHEBI:58359"/>
    </ligand>
</feature>
<feature type="binding site" evidence="1">
    <location>
        <position position="84"/>
    </location>
    <ligand>
        <name>ATP</name>
        <dbReference type="ChEBI" id="CHEBI:30616"/>
    </ligand>
</feature>
<feature type="binding site" evidence="1">
    <location>
        <position position="84"/>
    </location>
    <ligand>
        <name>Mg(2+)</name>
        <dbReference type="ChEBI" id="CHEBI:18420"/>
    </ligand>
</feature>
<feature type="binding site" evidence="1">
    <location>
        <position position="152"/>
    </location>
    <ligand>
        <name>Mg(2+)</name>
        <dbReference type="ChEBI" id="CHEBI:18420"/>
    </ligand>
</feature>
<feature type="binding site" evidence="1">
    <location>
        <begin position="159"/>
        <end position="161"/>
    </location>
    <ligand>
        <name>CTP</name>
        <dbReference type="ChEBI" id="CHEBI:37563"/>
        <note>allosteric inhibitor</note>
    </ligand>
</feature>
<feature type="binding site" evidence="1">
    <location>
        <begin position="198"/>
        <end position="203"/>
    </location>
    <ligand>
        <name>CTP</name>
        <dbReference type="ChEBI" id="CHEBI:37563"/>
        <note>allosteric inhibitor</note>
    </ligand>
</feature>
<feature type="binding site" evidence="1">
    <location>
        <begin position="198"/>
        <end position="203"/>
    </location>
    <ligand>
        <name>UTP</name>
        <dbReference type="ChEBI" id="CHEBI:46398"/>
    </ligand>
</feature>
<feature type="binding site" evidence="1">
    <location>
        <position position="234"/>
    </location>
    <ligand>
        <name>CTP</name>
        <dbReference type="ChEBI" id="CHEBI:37563"/>
        <note>allosteric inhibitor</note>
    </ligand>
</feature>
<feature type="binding site" evidence="1">
    <location>
        <position position="234"/>
    </location>
    <ligand>
        <name>UTP</name>
        <dbReference type="ChEBI" id="CHEBI:46398"/>
    </ligand>
</feature>
<feature type="binding site" evidence="1">
    <location>
        <position position="364"/>
    </location>
    <ligand>
        <name>L-glutamine</name>
        <dbReference type="ChEBI" id="CHEBI:58359"/>
    </ligand>
</feature>
<feature type="binding site" evidence="1">
    <location>
        <begin position="392"/>
        <end position="395"/>
    </location>
    <ligand>
        <name>L-glutamine</name>
        <dbReference type="ChEBI" id="CHEBI:58359"/>
    </ligand>
</feature>
<feature type="binding site" evidence="1">
    <location>
        <position position="415"/>
    </location>
    <ligand>
        <name>L-glutamine</name>
        <dbReference type="ChEBI" id="CHEBI:58359"/>
    </ligand>
</feature>
<feature type="binding site" evidence="1">
    <location>
        <position position="472"/>
    </location>
    <ligand>
        <name>L-glutamine</name>
        <dbReference type="ChEBI" id="CHEBI:58359"/>
    </ligand>
</feature>
<keyword id="KW-0067">ATP-binding</keyword>
<keyword id="KW-0315">Glutamine amidotransferase</keyword>
<keyword id="KW-0436">Ligase</keyword>
<keyword id="KW-0460">Magnesium</keyword>
<keyword id="KW-0479">Metal-binding</keyword>
<keyword id="KW-0547">Nucleotide-binding</keyword>
<keyword id="KW-0665">Pyrimidine biosynthesis</keyword>
<keyword id="KW-1185">Reference proteome</keyword>
<proteinExistence type="inferred from homology"/>
<comment type="function">
    <text evidence="1">Catalyzes the ATP-dependent amination of UTP to CTP with either L-glutamine or ammonia as the source of nitrogen. Regulates intracellular CTP levels through interactions with the four ribonucleotide triphosphates.</text>
</comment>
<comment type="catalytic activity">
    <reaction evidence="1">
        <text>UTP + L-glutamine + ATP + H2O = CTP + L-glutamate + ADP + phosphate + 2 H(+)</text>
        <dbReference type="Rhea" id="RHEA:26426"/>
        <dbReference type="ChEBI" id="CHEBI:15377"/>
        <dbReference type="ChEBI" id="CHEBI:15378"/>
        <dbReference type="ChEBI" id="CHEBI:29985"/>
        <dbReference type="ChEBI" id="CHEBI:30616"/>
        <dbReference type="ChEBI" id="CHEBI:37563"/>
        <dbReference type="ChEBI" id="CHEBI:43474"/>
        <dbReference type="ChEBI" id="CHEBI:46398"/>
        <dbReference type="ChEBI" id="CHEBI:58359"/>
        <dbReference type="ChEBI" id="CHEBI:456216"/>
        <dbReference type="EC" id="6.3.4.2"/>
    </reaction>
</comment>
<comment type="catalytic activity">
    <reaction evidence="1">
        <text>L-glutamine + H2O = L-glutamate + NH4(+)</text>
        <dbReference type="Rhea" id="RHEA:15889"/>
        <dbReference type="ChEBI" id="CHEBI:15377"/>
        <dbReference type="ChEBI" id="CHEBI:28938"/>
        <dbReference type="ChEBI" id="CHEBI:29985"/>
        <dbReference type="ChEBI" id="CHEBI:58359"/>
    </reaction>
</comment>
<comment type="catalytic activity">
    <reaction evidence="1">
        <text>UTP + NH4(+) + ATP = CTP + ADP + phosphate + 2 H(+)</text>
        <dbReference type="Rhea" id="RHEA:16597"/>
        <dbReference type="ChEBI" id="CHEBI:15378"/>
        <dbReference type="ChEBI" id="CHEBI:28938"/>
        <dbReference type="ChEBI" id="CHEBI:30616"/>
        <dbReference type="ChEBI" id="CHEBI:37563"/>
        <dbReference type="ChEBI" id="CHEBI:43474"/>
        <dbReference type="ChEBI" id="CHEBI:46398"/>
        <dbReference type="ChEBI" id="CHEBI:456216"/>
    </reaction>
</comment>
<comment type="activity regulation">
    <text evidence="1">Allosterically activated by GTP, when glutamine is the substrate; GTP has no effect on the reaction when ammonia is the substrate. The allosteric effector GTP functions by stabilizing the protein conformation that binds the tetrahedral intermediate(s) formed during glutamine hydrolysis. Inhibited by the product CTP, via allosteric rather than competitive inhibition.</text>
</comment>
<comment type="pathway">
    <text evidence="1">Pyrimidine metabolism; CTP biosynthesis via de novo pathway; CTP from UDP: step 2/2.</text>
</comment>
<comment type="subunit">
    <text evidence="1">Homotetramer.</text>
</comment>
<comment type="miscellaneous">
    <text evidence="1">CTPSs have evolved a hybrid strategy for distinguishing between UTP and CTP. The overlapping regions of the product feedback inhibitory and substrate sites recognize a common feature in both compounds, the triphosphate moiety. To differentiate isosteric substrate and product pyrimidine rings, an additional pocket far from the expected kinase/ligase catalytic site, specifically recognizes the cytosine and ribose portions of the product inhibitor.</text>
</comment>
<comment type="similarity">
    <text evidence="1">Belongs to the CTP synthase family.</text>
</comment>
<reference key="1">
    <citation type="journal article" date="2006" name="BMC Genomics">
        <title>The genome of the square archaeon Haloquadratum walsbyi: life at the limits of water activity.</title>
        <authorList>
            <person name="Bolhuis H."/>
            <person name="Palm P."/>
            <person name="Wende A."/>
            <person name="Falb M."/>
            <person name="Rampp M."/>
            <person name="Rodriguez-Valera F."/>
            <person name="Pfeiffer F."/>
            <person name="Oesterhelt D."/>
        </authorList>
    </citation>
    <scope>NUCLEOTIDE SEQUENCE [LARGE SCALE GENOMIC DNA]</scope>
    <source>
        <strain>DSM 16790 / HBSQ001</strain>
    </source>
</reference>
<dbReference type="EC" id="6.3.4.2" evidence="1"/>
<dbReference type="EMBL" id="AM180088">
    <property type="protein sequence ID" value="CAJ53294.1"/>
    <property type="molecule type" value="Genomic_DNA"/>
</dbReference>
<dbReference type="RefSeq" id="WP_011572400.1">
    <property type="nucleotide sequence ID" value="NC_008212.1"/>
</dbReference>
<dbReference type="SMR" id="Q18FG3"/>
<dbReference type="STRING" id="362976.HQ_3195A"/>
<dbReference type="GeneID" id="4194552"/>
<dbReference type="KEGG" id="hwa:HQ_3195A"/>
<dbReference type="eggNOG" id="arCOG00063">
    <property type="taxonomic scope" value="Archaea"/>
</dbReference>
<dbReference type="HOGENOM" id="CLU_011675_5_0_2"/>
<dbReference type="UniPathway" id="UPA00159">
    <property type="reaction ID" value="UER00277"/>
</dbReference>
<dbReference type="Proteomes" id="UP000001975">
    <property type="component" value="Chromosome"/>
</dbReference>
<dbReference type="GO" id="GO:0005524">
    <property type="term" value="F:ATP binding"/>
    <property type="evidence" value="ECO:0007669"/>
    <property type="project" value="UniProtKB-KW"/>
</dbReference>
<dbReference type="GO" id="GO:0003883">
    <property type="term" value="F:CTP synthase activity"/>
    <property type="evidence" value="ECO:0007669"/>
    <property type="project" value="UniProtKB-UniRule"/>
</dbReference>
<dbReference type="GO" id="GO:0004359">
    <property type="term" value="F:glutaminase activity"/>
    <property type="evidence" value="ECO:0007669"/>
    <property type="project" value="RHEA"/>
</dbReference>
<dbReference type="GO" id="GO:0042802">
    <property type="term" value="F:identical protein binding"/>
    <property type="evidence" value="ECO:0007669"/>
    <property type="project" value="TreeGrafter"/>
</dbReference>
<dbReference type="GO" id="GO:0046872">
    <property type="term" value="F:metal ion binding"/>
    <property type="evidence" value="ECO:0007669"/>
    <property type="project" value="UniProtKB-KW"/>
</dbReference>
<dbReference type="GO" id="GO:0044210">
    <property type="term" value="P:'de novo' CTP biosynthetic process"/>
    <property type="evidence" value="ECO:0007669"/>
    <property type="project" value="UniProtKB-UniRule"/>
</dbReference>
<dbReference type="GO" id="GO:0019856">
    <property type="term" value="P:pyrimidine nucleobase biosynthetic process"/>
    <property type="evidence" value="ECO:0007669"/>
    <property type="project" value="TreeGrafter"/>
</dbReference>
<dbReference type="CDD" id="cd03113">
    <property type="entry name" value="CTPS_N"/>
    <property type="match status" value="1"/>
</dbReference>
<dbReference type="CDD" id="cd01746">
    <property type="entry name" value="GATase1_CTP_Synthase"/>
    <property type="match status" value="1"/>
</dbReference>
<dbReference type="FunFam" id="3.40.50.300:FF:000009">
    <property type="entry name" value="CTP synthase"/>
    <property type="match status" value="1"/>
</dbReference>
<dbReference type="FunFam" id="3.40.50.880:FF:000002">
    <property type="entry name" value="CTP synthase"/>
    <property type="match status" value="1"/>
</dbReference>
<dbReference type="Gene3D" id="3.40.50.880">
    <property type="match status" value="1"/>
</dbReference>
<dbReference type="Gene3D" id="3.40.50.300">
    <property type="entry name" value="P-loop containing nucleotide triphosphate hydrolases"/>
    <property type="match status" value="1"/>
</dbReference>
<dbReference type="HAMAP" id="MF_01227">
    <property type="entry name" value="PyrG"/>
    <property type="match status" value="1"/>
</dbReference>
<dbReference type="InterPro" id="IPR029062">
    <property type="entry name" value="Class_I_gatase-like"/>
</dbReference>
<dbReference type="InterPro" id="IPR004468">
    <property type="entry name" value="CTP_synthase"/>
</dbReference>
<dbReference type="InterPro" id="IPR017456">
    <property type="entry name" value="CTP_synthase_N"/>
</dbReference>
<dbReference type="InterPro" id="IPR017926">
    <property type="entry name" value="GATASE"/>
</dbReference>
<dbReference type="InterPro" id="IPR033828">
    <property type="entry name" value="GATase1_CTP_Synthase"/>
</dbReference>
<dbReference type="InterPro" id="IPR027417">
    <property type="entry name" value="P-loop_NTPase"/>
</dbReference>
<dbReference type="NCBIfam" id="NF003792">
    <property type="entry name" value="PRK05380.1"/>
    <property type="match status" value="1"/>
</dbReference>
<dbReference type="NCBIfam" id="TIGR00337">
    <property type="entry name" value="PyrG"/>
    <property type="match status" value="1"/>
</dbReference>
<dbReference type="PANTHER" id="PTHR11550">
    <property type="entry name" value="CTP SYNTHASE"/>
    <property type="match status" value="1"/>
</dbReference>
<dbReference type="PANTHER" id="PTHR11550:SF0">
    <property type="entry name" value="CTP SYNTHASE-RELATED"/>
    <property type="match status" value="1"/>
</dbReference>
<dbReference type="Pfam" id="PF06418">
    <property type="entry name" value="CTP_synth_N"/>
    <property type="match status" value="1"/>
</dbReference>
<dbReference type="Pfam" id="PF00117">
    <property type="entry name" value="GATase"/>
    <property type="match status" value="1"/>
</dbReference>
<dbReference type="SUPFAM" id="SSF52317">
    <property type="entry name" value="Class I glutamine amidotransferase-like"/>
    <property type="match status" value="1"/>
</dbReference>
<dbReference type="SUPFAM" id="SSF52540">
    <property type="entry name" value="P-loop containing nucleoside triphosphate hydrolases"/>
    <property type="match status" value="1"/>
</dbReference>
<dbReference type="PROSITE" id="PS51273">
    <property type="entry name" value="GATASE_TYPE_1"/>
    <property type="match status" value="1"/>
</dbReference>
<organism>
    <name type="scientific">Haloquadratum walsbyi (strain DSM 16790 / HBSQ001)</name>
    <dbReference type="NCBI Taxonomy" id="362976"/>
    <lineage>
        <taxon>Archaea</taxon>
        <taxon>Methanobacteriati</taxon>
        <taxon>Methanobacteriota</taxon>
        <taxon>Stenosarchaea group</taxon>
        <taxon>Halobacteria</taxon>
        <taxon>Halobacteriales</taxon>
        <taxon>Haloferacaceae</taxon>
        <taxon>Haloquadratum</taxon>
    </lineage>
</organism>
<protein>
    <recommendedName>
        <fullName evidence="1">CTP synthase</fullName>
        <ecNumber evidence="1">6.3.4.2</ecNumber>
    </recommendedName>
    <alternativeName>
        <fullName evidence="1">Cytidine 5'-triphosphate synthase</fullName>
    </alternativeName>
    <alternativeName>
        <fullName evidence="1">Cytidine triphosphate synthetase</fullName>
        <shortName evidence="1">CTP synthetase</shortName>
        <shortName evidence="1">CTPS</shortName>
    </alternativeName>
    <alternativeName>
        <fullName evidence="1">UTP--ammonia ligase</fullName>
    </alternativeName>
</protein>
<name>PYRG_HALWD</name>
<sequence>MPKEPETEYDPSLGRKFIFVTGGVMSGLGKGITAASTGRLLSNAGFDVTAVKIDPYLNVDAGTMNPYQHGEVYVLKDGGEVDLDLGNYERFLGEDMTSDHNVTTGKTYKHVIEKERSGDYLGKTVQIIPHITDDIKRRIREAAAGTDVCIVEVGGTVGDIEGMPYLEALRQFAHEEASENILFTHVTLVPYSKNGEQKTKPTQHSVKELRSIGLQPDILVGRCSDRLEPATKEKIALFCDVPTTAVFSNPDVDDIYHVPLVIEEEGLDQHVMERLNVAEEAITTTDRTNTWRELVTRERTSSVDVALVGKYDLEDAYMSVHEALKHAGIETQTEVTVQWVDSDEMLDHHEDRLREADGVVVPGGFGSRGIAGKLKAIEYCREHNVPFLGLCLGFQMAVVEHAQNVLGFADAHSAELQPETPHPVIDILPEQYDVETMGGTMRLGAHETNIDPNTLAAAVYNGTVCTERHRHRYEVNPEYIDKLEAGALSFSGQANNRMEILERSDHPFFLGTQFHPEFRSRPDRASPPFVSFLKSVDSTLDARSLNVSTSEEVQI</sequence>